<gene>
    <name evidence="4" type="primary">ATR14</name>
    <name type="ORF">S40285_03338</name>
</gene>
<protein>
    <recommendedName>
        <fullName evidence="4">Cytochrome P450 monooxygenase ATR14</fullName>
        <ecNumber evidence="6">1.-.-.-</ecNumber>
    </recommendedName>
    <alternativeName>
        <fullName evidence="4">Core atranone cluster (CAC) protein 14</fullName>
    </alternativeName>
</protein>
<accession>A0A084R1J2</accession>
<sequence>MNVADIAMDLFRGAKGETISIFAIAKVTVTGVSRGLSKLVFGVVDQANLVNLGQYVVYSVVSMIYNITLHPLASFPGPVFWGASRWPSIWRLFKGRLVHDVHALHGQYGHVVRIAPNELAFSSAQAWKDIYGHKRGNNSMEEMPKFHKFYSGISKTPSIVSEPTRDGHRFIRRILSPAFSDKNLRELEPIVQGYISQFIDQLRSHCEDSTGSKVPLDLVSWYNSATFDIVGDLTFGRPFGSLEQGEEDPFIKDINHFAAVGGAMLIFTSHFPGRGILRFLASLGKVFQNGQEKHVTKMEESLVDRMKNKSSRPDIIDGLVKEKDGFQIDYDRVLENAAAITMAGSETTASQLSGLTALLLQNPNCLERLKKEVRSAFKSDKDITSTSSLVGVWQYSANHSPRNFTYPDEFRPDRWLDDRDQKEYEHDHGDAMQPFSVGPRDCPSQK</sequence>
<keyword id="KW-0349">Heme</keyword>
<keyword id="KW-0408">Iron</keyword>
<keyword id="KW-0479">Metal-binding</keyword>
<keyword id="KW-0503">Monooxygenase</keyword>
<keyword id="KW-0560">Oxidoreductase</keyword>
<keyword id="KW-1185">Reference proteome</keyword>
<reference key="1">
    <citation type="journal article" date="2014" name="BMC Genomics">
        <title>Comparative genome sequencing reveals chemotype-specific gene clusters in the toxigenic black mold Stachybotrys.</title>
        <authorList>
            <person name="Semeiks J."/>
            <person name="Borek D."/>
            <person name="Otwinowski Z."/>
            <person name="Grishin N.V."/>
        </authorList>
    </citation>
    <scope>NUCLEOTIDE SEQUENCE [LARGE SCALE GENOMIC DNA]</scope>
    <scope>IDENTIFICATION</scope>
    <scope>FUNCTION</scope>
    <source>
        <strain>IBT 40285</strain>
    </source>
</reference>
<evidence type="ECO:0000250" key="1">
    <source>
        <dbReference type="UniProtKB" id="P04798"/>
    </source>
</evidence>
<evidence type="ECO:0000250" key="2">
    <source>
        <dbReference type="UniProtKB" id="Q4WAY4"/>
    </source>
</evidence>
<evidence type="ECO:0000256" key="3">
    <source>
        <dbReference type="SAM" id="MobiDB-lite"/>
    </source>
</evidence>
<evidence type="ECO:0000303" key="4">
    <source>
    </source>
</evidence>
<evidence type="ECO:0000305" key="5"/>
<evidence type="ECO:0000305" key="6">
    <source>
    </source>
</evidence>
<dbReference type="EC" id="1.-.-.-" evidence="6"/>
<dbReference type="EMBL" id="KL659308">
    <property type="protein sequence ID" value="KFA70077.1"/>
    <property type="molecule type" value="Genomic_DNA"/>
</dbReference>
<dbReference type="STRING" id="1283841.A0A084R1J2"/>
<dbReference type="HOGENOM" id="CLU_001570_14_11_1"/>
<dbReference type="InParanoid" id="A0A084R1J2"/>
<dbReference type="OrthoDB" id="1470350at2759"/>
<dbReference type="Proteomes" id="UP000028524">
    <property type="component" value="Unassembled WGS sequence"/>
</dbReference>
<dbReference type="GO" id="GO:0020037">
    <property type="term" value="F:heme binding"/>
    <property type="evidence" value="ECO:0007669"/>
    <property type="project" value="InterPro"/>
</dbReference>
<dbReference type="GO" id="GO:0005506">
    <property type="term" value="F:iron ion binding"/>
    <property type="evidence" value="ECO:0007669"/>
    <property type="project" value="InterPro"/>
</dbReference>
<dbReference type="GO" id="GO:0004497">
    <property type="term" value="F:monooxygenase activity"/>
    <property type="evidence" value="ECO:0007669"/>
    <property type="project" value="UniProtKB-KW"/>
</dbReference>
<dbReference type="GO" id="GO:0016705">
    <property type="term" value="F:oxidoreductase activity, acting on paired donors, with incorporation or reduction of molecular oxygen"/>
    <property type="evidence" value="ECO:0007669"/>
    <property type="project" value="InterPro"/>
</dbReference>
<dbReference type="GO" id="GO:0009058">
    <property type="term" value="P:biosynthetic process"/>
    <property type="evidence" value="ECO:0007669"/>
    <property type="project" value="UniProtKB-ARBA"/>
</dbReference>
<dbReference type="Gene3D" id="1.10.630.10">
    <property type="entry name" value="Cytochrome P450"/>
    <property type="match status" value="2"/>
</dbReference>
<dbReference type="InterPro" id="IPR001128">
    <property type="entry name" value="Cyt_P450"/>
</dbReference>
<dbReference type="InterPro" id="IPR002401">
    <property type="entry name" value="Cyt_P450_E_grp-I"/>
</dbReference>
<dbReference type="InterPro" id="IPR036396">
    <property type="entry name" value="Cyt_P450_sf"/>
</dbReference>
<dbReference type="InterPro" id="IPR050121">
    <property type="entry name" value="Cytochrome_P450_monoxygenase"/>
</dbReference>
<dbReference type="PANTHER" id="PTHR24305">
    <property type="entry name" value="CYTOCHROME P450"/>
    <property type="match status" value="1"/>
</dbReference>
<dbReference type="PANTHER" id="PTHR24305:SF210">
    <property type="entry name" value="CYTOCHROME P450 MONOOXYGENASE ASQL-RELATED"/>
    <property type="match status" value="1"/>
</dbReference>
<dbReference type="Pfam" id="PF00067">
    <property type="entry name" value="p450"/>
    <property type="match status" value="2"/>
</dbReference>
<dbReference type="PRINTS" id="PR00463">
    <property type="entry name" value="EP450I"/>
</dbReference>
<dbReference type="SUPFAM" id="SSF48264">
    <property type="entry name" value="Cytochrome P450"/>
    <property type="match status" value="1"/>
</dbReference>
<organism>
    <name type="scientific">Stachybotrys chlorohalonatus (strain IBT 40285)</name>
    <dbReference type="NCBI Taxonomy" id="1283841"/>
    <lineage>
        <taxon>Eukaryota</taxon>
        <taxon>Fungi</taxon>
        <taxon>Dikarya</taxon>
        <taxon>Ascomycota</taxon>
        <taxon>Pezizomycotina</taxon>
        <taxon>Sordariomycetes</taxon>
        <taxon>Hypocreomycetidae</taxon>
        <taxon>Hypocreales</taxon>
        <taxon>Stachybotryaceae</taxon>
        <taxon>Stachybotrys</taxon>
    </lineage>
</organism>
<comment type="function">
    <text evidence="2 6">Cytochrome P450 monooxygenase; part of the core atranone cluster (CAC) which products are predicted to catalyze most or all steps of mycotoxin atranone synthesis, starting from geranylgeranyl pyrophosphate (GGPP) (PubMed:25015739). The initial cyclization of GGPP to dolabellane is probably performed by the terpene cyclase ATR13 (PubMed:25015739). The Baeyer-Villiger oxidation near the end of the atranone synthesis, which converts atranones D and E to atranones F and G is predicted to be catalyzed by the monooxygenase ATR8 (PubMed:25015739). Of the CAC's other predicted gene products, the reducing PKS ATR6 might synthesize a polyketide chain (PubMed:25015739). This polyketide is probably transferred onto the atranone backbone by the polyketide transferase ATR5 (By similarity). Other predicted CAC products include 4 oxygenases (ATR2, ATR3, ATR4, and ATR14), 3 short-chain reductases (ATR7, ATR9, and ATR10), and a methyltransferase (ATR12) (PubMed:25015739). These may all be involved in the various steps of atranone biosynthesis, although their specific roles must await experimental determination (PubMed:25015739).</text>
</comment>
<comment type="cofactor">
    <cofactor evidence="1">
        <name>heme</name>
        <dbReference type="ChEBI" id="CHEBI:30413"/>
    </cofactor>
</comment>
<comment type="pathway">
    <text evidence="6">Mycotoxin biosynthesis.</text>
</comment>
<comment type="similarity">
    <text evidence="5">Belongs to the cytochrome P450 family.</text>
</comment>
<feature type="chain" id="PRO_0000442387" description="Cytochrome P450 monooxygenase ATR14">
    <location>
        <begin position="1"/>
        <end position="446"/>
    </location>
</feature>
<feature type="region of interest" description="Disordered" evidence="3">
    <location>
        <begin position="403"/>
        <end position="446"/>
    </location>
</feature>
<feature type="compositionally biased region" description="Basic and acidic residues" evidence="3">
    <location>
        <begin position="408"/>
        <end position="430"/>
    </location>
</feature>
<feature type="binding site" description="axial binding residue" evidence="1">
    <location>
        <position position="442"/>
    </location>
    <ligand>
        <name>heme</name>
        <dbReference type="ChEBI" id="CHEBI:30413"/>
    </ligand>
    <ligandPart>
        <name>Fe</name>
        <dbReference type="ChEBI" id="CHEBI:18248"/>
    </ligandPart>
</feature>
<proteinExistence type="inferred from homology"/>
<name>ATR14_STAC4</name>